<proteinExistence type="inferred from homology"/>
<evidence type="ECO:0000255" key="1">
    <source>
        <dbReference type="HAMAP-Rule" id="MF_01102"/>
    </source>
</evidence>
<gene>
    <name evidence="1" type="primary">mnmC</name>
    <name type="ordered locus">Nmul_A1927</name>
</gene>
<sequence>MLDWQNGQLYSTRFGDVYFSRDSGLEEKQYVFLQGNRLADRFESLQPDTAFSIGETGFGTGLSFLCTWRLFIQIAPLRTSLDFFSVEKYPLDEKELSAALALWPELGPYADELMLRWQRRVPGWNRWSFAGGRVRLTLAIEDVTRALPETHGIDAWFLDGFSPARNPEMWTLQIFHWIARASRAGATFATYTSAGVVRRGLEQAGFQVKKISGFGHKREMLQGDLPGPPPVRLAPTTAIVIGGGIAGCAAASALASRGLIVELLESHTLGAGASGNPIGILHARLSAGMNALHRFVLASYGHALALLDEKIPVDGVMRSECGELQLSFSAEEARRIGKLATLDWPAHVFRPVDAAEASALAGIELSYGGLWFPGSGWLAPPQLCVALLGSQAITLYTGRTVKSLTPTSHGWRVQAEDQRKQAWSLEAEIVVVCTGYQVKSLPALANLPLTPVRGQLTLIPATTASQNLRTIVCGSGYFSPAVAGRHMVGATHRFNDTSINLNVSEHAENLSRLREISPVLRRLSDEVSQDIRQLEQLDGRTSIRGSVPGAMPLVGELLPGLYTSLGHGTRGLITAGISAELVAATACGQLLPLPLSVVNALSPVRRASPAIPVSIKG</sequence>
<protein>
    <recommendedName>
        <fullName evidence="1">tRNA 5-methylaminomethyl-2-thiouridine biosynthesis bifunctional protein MnmC</fullName>
        <shortName evidence="1">tRNA mnm(5)s(2)U biosynthesis bifunctional protein</shortName>
    </recommendedName>
    <domain>
        <recommendedName>
            <fullName evidence="1">tRNA (mnm(5)s(2)U34)-methyltransferase</fullName>
            <ecNumber evidence="1">2.1.1.61</ecNumber>
        </recommendedName>
    </domain>
    <domain>
        <recommendedName>
            <fullName evidence="1">FAD-dependent cmnm(5)s(2)U34 oxidoreductase</fullName>
            <ecNumber evidence="1">1.5.-.-</ecNumber>
        </recommendedName>
    </domain>
</protein>
<accession>Q2Y7P9</accession>
<reference key="1">
    <citation type="submission" date="2005-08" db="EMBL/GenBank/DDBJ databases">
        <title>Complete sequence of chromosome 1 of Nitrosospira multiformis ATCC 25196.</title>
        <authorList>
            <person name="Copeland A."/>
            <person name="Lucas S."/>
            <person name="Lapidus A."/>
            <person name="Barry K."/>
            <person name="Detter J.C."/>
            <person name="Glavina T."/>
            <person name="Hammon N."/>
            <person name="Israni S."/>
            <person name="Pitluck S."/>
            <person name="Chain P."/>
            <person name="Malfatti S."/>
            <person name="Shin M."/>
            <person name="Vergez L."/>
            <person name="Schmutz J."/>
            <person name="Larimer F."/>
            <person name="Land M."/>
            <person name="Hauser L."/>
            <person name="Kyrpides N."/>
            <person name="Lykidis A."/>
            <person name="Richardson P."/>
        </authorList>
    </citation>
    <scope>NUCLEOTIDE SEQUENCE [LARGE SCALE GENOMIC DNA]</scope>
    <source>
        <strain>ATCC 25196 / NCIMB 11849 / C 71</strain>
    </source>
</reference>
<keyword id="KW-0963">Cytoplasm</keyword>
<keyword id="KW-0274">FAD</keyword>
<keyword id="KW-0285">Flavoprotein</keyword>
<keyword id="KW-0489">Methyltransferase</keyword>
<keyword id="KW-0511">Multifunctional enzyme</keyword>
<keyword id="KW-0560">Oxidoreductase</keyword>
<keyword id="KW-1185">Reference proteome</keyword>
<keyword id="KW-0949">S-adenosyl-L-methionine</keyword>
<keyword id="KW-0808">Transferase</keyword>
<keyword id="KW-0819">tRNA processing</keyword>
<dbReference type="EC" id="2.1.1.61" evidence="1"/>
<dbReference type="EC" id="1.5.-.-" evidence="1"/>
<dbReference type="EMBL" id="CP000103">
    <property type="protein sequence ID" value="ABB75222.1"/>
    <property type="molecule type" value="Genomic_DNA"/>
</dbReference>
<dbReference type="RefSeq" id="WP_011381242.1">
    <property type="nucleotide sequence ID" value="NC_007614.1"/>
</dbReference>
<dbReference type="SMR" id="Q2Y7P9"/>
<dbReference type="STRING" id="323848.Nmul_A1927"/>
<dbReference type="KEGG" id="nmu:Nmul_A1927"/>
<dbReference type="eggNOG" id="COG0665">
    <property type="taxonomic scope" value="Bacteria"/>
</dbReference>
<dbReference type="eggNOG" id="COG4121">
    <property type="taxonomic scope" value="Bacteria"/>
</dbReference>
<dbReference type="HOGENOM" id="CLU_022427_1_0_4"/>
<dbReference type="OrthoDB" id="9786494at2"/>
<dbReference type="Proteomes" id="UP000002718">
    <property type="component" value="Chromosome"/>
</dbReference>
<dbReference type="GO" id="GO:0005737">
    <property type="term" value="C:cytoplasm"/>
    <property type="evidence" value="ECO:0007669"/>
    <property type="project" value="UniProtKB-SubCell"/>
</dbReference>
<dbReference type="GO" id="GO:0050660">
    <property type="term" value="F:flavin adenine dinucleotide binding"/>
    <property type="evidence" value="ECO:0007669"/>
    <property type="project" value="UniProtKB-UniRule"/>
</dbReference>
<dbReference type="GO" id="GO:0016645">
    <property type="term" value="F:oxidoreductase activity, acting on the CH-NH group of donors"/>
    <property type="evidence" value="ECO:0007669"/>
    <property type="project" value="InterPro"/>
</dbReference>
<dbReference type="GO" id="GO:0004808">
    <property type="term" value="F:tRNA (5-methylaminomethyl-2-thiouridylate)(34)-methyltransferase activity"/>
    <property type="evidence" value="ECO:0007669"/>
    <property type="project" value="UniProtKB-EC"/>
</dbReference>
<dbReference type="GO" id="GO:0032259">
    <property type="term" value="P:methylation"/>
    <property type="evidence" value="ECO:0007669"/>
    <property type="project" value="UniProtKB-KW"/>
</dbReference>
<dbReference type="GO" id="GO:0002098">
    <property type="term" value="P:tRNA wobble uridine modification"/>
    <property type="evidence" value="ECO:0007669"/>
    <property type="project" value="TreeGrafter"/>
</dbReference>
<dbReference type="Gene3D" id="3.30.9.10">
    <property type="entry name" value="D-Amino Acid Oxidase, subunit A, domain 2"/>
    <property type="match status" value="1"/>
</dbReference>
<dbReference type="Gene3D" id="3.50.50.60">
    <property type="entry name" value="FAD/NAD(P)-binding domain"/>
    <property type="match status" value="1"/>
</dbReference>
<dbReference type="Gene3D" id="3.40.50.150">
    <property type="entry name" value="Vaccinia Virus protein VP39"/>
    <property type="match status" value="1"/>
</dbReference>
<dbReference type="HAMAP" id="MF_01102">
    <property type="entry name" value="MnmC"/>
    <property type="match status" value="1"/>
</dbReference>
<dbReference type="InterPro" id="IPR006076">
    <property type="entry name" value="FAD-dep_OxRdtase"/>
</dbReference>
<dbReference type="InterPro" id="IPR036188">
    <property type="entry name" value="FAD/NAD-bd_sf"/>
</dbReference>
<dbReference type="InterPro" id="IPR008471">
    <property type="entry name" value="MnmC-like_methylTransf"/>
</dbReference>
<dbReference type="InterPro" id="IPR029063">
    <property type="entry name" value="SAM-dependent_MTases_sf"/>
</dbReference>
<dbReference type="InterPro" id="IPR023032">
    <property type="entry name" value="tRNA_MAMT_biosynth_bifunc_MnmC"/>
</dbReference>
<dbReference type="InterPro" id="IPR047785">
    <property type="entry name" value="tRNA_MNMC2"/>
</dbReference>
<dbReference type="InterPro" id="IPR017610">
    <property type="entry name" value="tRNA_S-uridine_synth_MnmC_C"/>
</dbReference>
<dbReference type="NCBIfam" id="TIGR03197">
    <property type="entry name" value="MnmC_Cterm"/>
    <property type="match status" value="1"/>
</dbReference>
<dbReference type="NCBIfam" id="NF002481">
    <property type="entry name" value="PRK01747.1-2"/>
    <property type="match status" value="1"/>
</dbReference>
<dbReference type="NCBIfam" id="NF033855">
    <property type="entry name" value="tRNA_MNMC2"/>
    <property type="match status" value="1"/>
</dbReference>
<dbReference type="PANTHER" id="PTHR13847">
    <property type="entry name" value="SARCOSINE DEHYDROGENASE-RELATED"/>
    <property type="match status" value="1"/>
</dbReference>
<dbReference type="PANTHER" id="PTHR13847:SF283">
    <property type="entry name" value="TRNA 5-METHYLAMINOMETHYL-2-THIOURIDINE BIOSYNTHESIS BIFUNCTIONAL PROTEIN MNMC"/>
    <property type="match status" value="1"/>
</dbReference>
<dbReference type="Pfam" id="PF01266">
    <property type="entry name" value="DAO"/>
    <property type="match status" value="1"/>
</dbReference>
<dbReference type="Pfam" id="PF05430">
    <property type="entry name" value="Methyltransf_30"/>
    <property type="match status" value="1"/>
</dbReference>
<dbReference type="SUPFAM" id="SSF54373">
    <property type="entry name" value="FAD-linked reductases, C-terminal domain"/>
    <property type="match status" value="1"/>
</dbReference>
<dbReference type="SUPFAM" id="SSF51905">
    <property type="entry name" value="FAD/NAD(P)-binding domain"/>
    <property type="match status" value="1"/>
</dbReference>
<comment type="function">
    <text evidence="1">Catalyzes the last two steps in the biosynthesis of 5-methylaminomethyl-2-thiouridine (mnm(5)s(2)U) at the wobble position (U34) in tRNA. Catalyzes the FAD-dependent demodification of cmnm(5)s(2)U34 to nm(5)s(2)U34, followed by the transfer of a methyl group from S-adenosyl-L-methionine to nm(5)s(2)U34, to form mnm(5)s(2)U34.</text>
</comment>
<comment type="catalytic activity">
    <reaction evidence="1">
        <text>5-aminomethyl-2-thiouridine(34) in tRNA + S-adenosyl-L-methionine = 5-methylaminomethyl-2-thiouridine(34) in tRNA + S-adenosyl-L-homocysteine + H(+)</text>
        <dbReference type="Rhea" id="RHEA:19569"/>
        <dbReference type="Rhea" id="RHEA-COMP:10195"/>
        <dbReference type="Rhea" id="RHEA-COMP:10197"/>
        <dbReference type="ChEBI" id="CHEBI:15378"/>
        <dbReference type="ChEBI" id="CHEBI:57856"/>
        <dbReference type="ChEBI" id="CHEBI:59789"/>
        <dbReference type="ChEBI" id="CHEBI:74454"/>
        <dbReference type="ChEBI" id="CHEBI:74455"/>
        <dbReference type="EC" id="2.1.1.61"/>
    </reaction>
</comment>
<comment type="cofactor">
    <cofactor evidence="1">
        <name>FAD</name>
        <dbReference type="ChEBI" id="CHEBI:57692"/>
    </cofactor>
</comment>
<comment type="subcellular location">
    <subcellularLocation>
        <location evidence="1">Cytoplasm</location>
    </subcellularLocation>
</comment>
<comment type="similarity">
    <text evidence="1">In the N-terminal section; belongs to the methyltransferase superfamily. tRNA (mnm(5)s(2)U34)-methyltransferase family.</text>
</comment>
<comment type="similarity">
    <text evidence="1">In the C-terminal section; belongs to the DAO family.</text>
</comment>
<name>MNMC_NITMU</name>
<feature type="chain" id="PRO_0000348005" description="tRNA 5-methylaminomethyl-2-thiouridine biosynthesis bifunctional protein MnmC">
    <location>
        <begin position="1"/>
        <end position="617"/>
    </location>
</feature>
<feature type="region of interest" description="tRNA (mnm(5)s(2)U34)-methyltransferase">
    <location>
        <begin position="1"/>
        <end position="226"/>
    </location>
</feature>
<feature type="region of interest" description="FAD-dependent cmnm(5)s(2)U34 oxidoreductase">
    <location>
        <begin position="241"/>
        <end position="617"/>
    </location>
</feature>
<organism>
    <name type="scientific">Nitrosospira multiformis (strain ATCC 25196 / NCIMB 11849 / C 71)</name>
    <dbReference type="NCBI Taxonomy" id="323848"/>
    <lineage>
        <taxon>Bacteria</taxon>
        <taxon>Pseudomonadati</taxon>
        <taxon>Pseudomonadota</taxon>
        <taxon>Betaproteobacteria</taxon>
        <taxon>Nitrosomonadales</taxon>
        <taxon>Nitrosomonadaceae</taxon>
        <taxon>Nitrosospira</taxon>
    </lineage>
</organism>